<evidence type="ECO:0000255" key="1">
    <source>
        <dbReference type="HAMAP-Rule" id="MF_00159"/>
    </source>
</evidence>
<evidence type="ECO:0000256" key="2">
    <source>
        <dbReference type="SAM" id="MobiDB-lite"/>
    </source>
</evidence>
<accession>Q634Q9</accession>
<sequence>MNEMTHRTKTRPVKVGNLTIGGNNELIIQSMTTTKTHDVEATVAEIKRLEEAGCQVVRVAVPDERAANAIADIKKQINIPLVADIHFDYRLALKAIEGGIDKVRINPGNIGRRHKVEAVVNAAKERGIPIRIGVNAGSLERHILEKYGYPTADGMVESALHHIKILEDLDFHDIIVSMKASDVNLAIEAYEKAARAFDYPLHLGITESGTLFAGTVKSAAGLGAILNKGIGNTLRISLSADPVEEVKVARELLKSFGLASNAATLISCPTCGRIEIDLISIANEVEEYISTLQVPIKVAVLGCAVNGPGEAREADIGIAGARGEGLLFRKGQVVRKVPEEIMVEELKKEIDVIAAEMAAEREKEKEKEKEKEKETQEQ</sequence>
<organism>
    <name type="scientific">Bacillus cereus (strain ZK / E33L)</name>
    <dbReference type="NCBI Taxonomy" id="288681"/>
    <lineage>
        <taxon>Bacteria</taxon>
        <taxon>Bacillati</taxon>
        <taxon>Bacillota</taxon>
        <taxon>Bacilli</taxon>
        <taxon>Bacillales</taxon>
        <taxon>Bacillaceae</taxon>
        <taxon>Bacillus</taxon>
        <taxon>Bacillus cereus group</taxon>
    </lineage>
</organism>
<proteinExistence type="inferred from homology"/>
<keyword id="KW-0004">4Fe-4S</keyword>
<keyword id="KW-0408">Iron</keyword>
<keyword id="KW-0411">Iron-sulfur</keyword>
<keyword id="KW-0414">Isoprene biosynthesis</keyword>
<keyword id="KW-0479">Metal-binding</keyword>
<keyword id="KW-0560">Oxidoreductase</keyword>
<protein>
    <recommendedName>
        <fullName evidence="1">4-hydroxy-3-methylbut-2-en-1-yl diphosphate synthase (flavodoxin)</fullName>
        <ecNumber evidence="1">1.17.7.3</ecNumber>
    </recommendedName>
    <alternativeName>
        <fullName evidence="1">1-hydroxy-2-methyl-2-(E)-butenyl 4-diphosphate synthase</fullName>
    </alternativeName>
</protein>
<feature type="chain" id="PRO_0000190530" description="4-hydroxy-3-methylbut-2-en-1-yl diphosphate synthase (flavodoxin)">
    <location>
        <begin position="1"/>
        <end position="378"/>
    </location>
</feature>
<feature type="region of interest" description="Disordered" evidence="2">
    <location>
        <begin position="359"/>
        <end position="378"/>
    </location>
</feature>
<feature type="binding site" evidence="1">
    <location>
        <position position="268"/>
    </location>
    <ligand>
        <name>[4Fe-4S] cluster</name>
        <dbReference type="ChEBI" id="CHEBI:49883"/>
    </ligand>
</feature>
<feature type="binding site" evidence="1">
    <location>
        <position position="271"/>
    </location>
    <ligand>
        <name>[4Fe-4S] cluster</name>
        <dbReference type="ChEBI" id="CHEBI:49883"/>
    </ligand>
</feature>
<feature type="binding site" evidence="1">
    <location>
        <position position="303"/>
    </location>
    <ligand>
        <name>[4Fe-4S] cluster</name>
        <dbReference type="ChEBI" id="CHEBI:49883"/>
    </ligand>
</feature>
<feature type="binding site" evidence="1">
    <location>
        <position position="310"/>
    </location>
    <ligand>
        <name>[4Fe-4S] cluster</name>
        <dbReference type="ChEBI" id="CHEBI:49883"/>
    </ligand>
</feature>
<name>ISPG_BACCZ</name>
<dbReference type="EC" id="1.17.7.3" evidence="1"/>
<dbReference type="EMBL" id="CP000001">
    <property type="protein sequence ID" value="AAU16238.1"/>
    <property type="molecule type" value="Genomic_DNA"/>
</dbReference>
<dbReference type="SMR" id="Q634Q9"/>
<dbReference type="KEGG" id="bcz:BCE33L4028"/>
<dbReference type="PATRIC" id="fig|288681.22.peg.1363"/>
<dbReference type="UniPathway" id="UPA00056">
    <property type="reaction ID" value="UER00096"/>
</dbReference>
<dbReference type="Proteomes" id="UP000002612">
    <property type="component" value="Chromosome"/>
</dbReference>
<dbReference type="GO" id="GO:0051539">
    <property type="term" value="F:4 iron, 4 sulfur cluster binding"/>
    <property type="evidence" value="ECO:0007669"/>
    <property type="project" value="UniProtKB-UniRule"/>
</dbReference>
<dbReference type="GO" id="GO:0046429">
    <property type="term" value="F:4-hydroxy-3-methylbut-2-en-1-yl diphosphate synthase activity (ferredoxin)"/>
    <property type="evidence" value="ECO:0007669"/>
    <property type="project" value="UniProtKB-UniRule"/>
</dbReference>
<dbReference type="GO" id="GO:0141197">
    <property type="term" value="F:4-hydroxy-3-methylbut-2-enyl-diphosphate synthase activity (flavodoxin)"/>
    <property type="evidence" value="ECO:0007669"/>
    <property type="project" value="UniProtKB-EC"/>
</dbReference>
<dbReference type="GO" id="GO:0005506">
    <property type="term" value="F:iron ion binding"/>
    <property type="evidence" value="ECO:0007669"/>
    <property type="project" value="InterPro"/>
</dbReference>
<dbReference type="GO" id="GO:0019288">
    <property type="term" value="P:isopentenyl diphosphate biosynthetic process, methylerythritol 4-phosphate pathway"/>
    <property type="evidence" value="ECO:0007669"/>
    <property type="project" value="UniProtKB-UniRule"/>
</dbReference>
<dbReference type="GO" id="GO:0016114">
    <property type="term" value="P:terpenoid biosynthetic process"/>
    <property type="evidence" value="ECO:0007669"/>
    <property type="project" value="InterPro"/>
</dbReference>
<dbReference type="FunFam" id="3.20.20.20:FF:000001">
    <property type="entry name" value="4-hydroxy-3-methylbut-2-en-1-yl diphosphate synthase (flavodoxin)"/>
    <property type="match status" value="1"/>
</dbReference>
<dbReference type="FunFam" id="3.30.413.10:FF:000005">
    <property type="entry name" value="4-hydroxy-3-methylbut-2-en-1-yl diphosphate synthase (flavodoxin)"/>
    <property type="match status" value="1"/>
</dbReference>
<dbReference type="Gene3D" id="3.20.20.20">
    <property type="entry name" value="Dihydropteroate synthase-like"/>
    <property type="match status" value="1"/>
</dbReference>
<dbReference type="Gene3D" id="3.30.413.10">
    <property type="entry name" value="Sulfite Reductase Hemoprotein, domain 1"/>
    <property type="match status" value="1"/>
</dbReference>
<dbReference type="HAMAP" id="MF_00159">
    <property type="entry name" value="IspG"/>
    <property type="match status" value="1"/>
</dbReference>
<dbReference type="InterPro" id="IPR011005">
    <property type="entry name" value="Dihydropteroate_synth-like_sf"/>
</dbReference>
<dbReference type="InterPro" id="IPR016425">
    <property type="entry name" value="IspG_bac"/>
</dbReference>
<dbReference type="InterPro" id="IPR004588">
    <property type="entry name" value="IspG_bac-typ"/>
</dbReference>
<dbReference type="InterPro" id="IPR045854">
    <property type="entry name" value="NO2/SO3_Rdtase_4Fe4S_sf"/>
</dbReference>
<dbReference type="NCBIfam" id="TIGR00612">
    <property type="entry name" value="ispG_gcpE"/>
    <property type="match status" value="1"/>
</dbReference>
<dbReference type="NCBIfam" id="NF001540">
    <property type="entry name" value="PRK00366.1"/>
    <property type="match status" value="1"/>
</dbReference>
<dbReference type="PANTHER" id="PTHR30454">
    <property type="entry name" value="4-HYDROXY-3-METHYLBUT-2-EN-1-YL DIPHOSPHATE SYNTHASE"/>
    <property type="match status" value="1"/>
</dbReference>
<dbReference type="PANTHER" id="PTHR30454:SF0">
    <property type="entry name" value="4-HYDROXY-3-METHYLBUT-2-EN-1-YL DIPHOSPHATE SYNTHASE (FERREDOXIN), CHLOROPLASTIC"/>
    <property type="match status" value="1"/>
</dbReference>
<dbReference type="Pfam" id="PF04551">
    <property type="entry name" value="GcpE"/>
    <property type="match status" value="1"/>
</dbReference>
<dbReference type="PIRSF" id="PIRSF004640">
    <property type="entry name" value="IspG"/>
    <property type="match status" value="1"/>
</dbReference>
<dbReference type="SUPFAM" id="SSF51717">
    <property type="entry name" value="Dihydropteroate synthetase-like"/>
    <property type="match status" value="1"/>
</dbReference>
<dbReference type="SUPFAM" id="SSF56014">
    <property type="entry name" value="Nitrite and sulphite reductase 4Fe-4S domain-like"/>
    <property type="match status" value="1"/>
</dbReference>
<comment type="function">
    <text evidence="1">Converts 2C-methyl-D-erythritol 2,4-cyclodiphosphate (ME-2,4cPP) into 1-hydroxy-2-methyl-2-(E)-butenyl 4-diphosphate.</text>
</comment>
<comment type="catalytic activity">
    <reaction evidence="1">
        <text>(2E)-4-hydroxy-3-methylbut-2-enyl diphosphate + oxidized [flavodoxin] + H2O + 2 H(+) = 2-C-methyl-D-erythritol 2,4-cyclic diphosphate + reduced [flavodoxin]</text>
        <dbReference type="Rhea" id="RHEA:43604"/>
        <dbReference type="Rhea" id="RHEA-COMP:10622"/>
        <dbReference type="Rhea" id="RHEA-COMP:10623"/>
        <dbReference type="ChEBI" id="CHEBI:15377"/>
        <dbReference type="ChEBI" id="CHEBI:15378"/>
        <dbReference type="ChEBI" id="CHEBI:57618"/>
        <dbReference type="ChEBI" id="CHEBI:58210"/>
        <dbReference type="ChEBI" id="CHEBI:58483"/>
        <dbReference type="ChEBI" id="CHEBI:128753"/>
        <dbReference type="EC" id="1.17.7.3"/>
    </reaction>
</comment>
<comment type="cofactor">
    <cofactor evidence="1">
        <name>[4Fe-4S] cluster</name>
        <dbReference type="ChEBI" id="CHEBI:49883"/>
    </cofactor>
    <text evidence="1">Binds 1 [4Fe-4S] cluster.</text>
</comment>
<comment type="pathway">
    <text evidence="1">Isoprenoid biosynthesis; isopentenyl diphosphate biosynthesis via DXP pathway; isopentenyl diphosphate from 1-deoxy-D-xylulose 5-phosphate: step 5/6.</text>
</comment>
<comment type="similarity">
    <text evidence="1">Belongs to the IspG family.</text>
</comment>
<gene>
    <name evidence="1" type="primary">ispG</name>
    <name type="synonym">gcpE</name>
    <name type="ordered locus">BCE33L4028</name>
</gene>
<reference key="1">
    <citation type="journal article" date="2006" name="J. Bacteriol.">
        <title>Pathogenomic sequence analysis of Bacillus cereus and Bacillus thuringiensis isolates closely related to Bacillus anthracis.</title>
        <authorList>
            <person name="Han C.S."/>
            <person name="Xie G."/>
            <person name="Challacombe J.F."/>
            <person name="Altherr M.R."/>
            <person name="Bhotika S.S."/>
            <person name="Bruce D."/>
            <person name="Campbell C.S."/>
            <person name="Campbell M.L."/>
            <person name="Chen J."/>
            <person name="Chertkov O."/>
            <person name="Cleland C."/>
            <person name="Dimitrijevic M."/>
            <person name="Doggett N.A."/>
            <person name="Fawcett J.J."/>
            <person name="Glavina T."/>
            <person name="Goodwin L.A."/>
            <person name="Hill K.K."/>
            <person name="Hitchcock P."/>
            <person name="Jackson P.J."/>
            <person name="Keim P."/>
            <person name="Kewalramani A.R."/>
            <person name="Longmire J."/>
            <person name="Lucas S."/>
            <person name="Malfatti S."/>
            <person name="McMurry K."/>
            <person name="Meincke L.J."/>
            <person name="Misra M."/>
            <person name="Moseman B.L."/>
            <person name="Mundt M."/>
            <person name="Munk A.C."/>
            <person name="Okinaka R.T."/>
            <person name="Parson-Quintana B."/>
            <person name="Reilly L.P."/>
            <person name="Richardson P."/>
            <person name="Robinson D.L."/>
            <person name="Rubin E."/>
            <person name="Saunders E."/>
            <person name="Tapia R."/>
            <person name="Tesmer J.G."/>
            <person name="Thayer N."/>
            <person name="Thompson L.S."/>
            <person name="Tice H."/>
            <person name="Ticknor L.O."/>
            <person name="Wills P.L."/>
            <person name="Brettin T.S."/>
            <person name="Gilna P."/>
        </authorList>
    </citation>
    <scope>NUCLEOTIDE SEQUENCE [LARGE SCALE GENOMIC DNA]</scope>
    <source>
        <strain>ZK / E33L</strain>
    </source>
</reference>